<proteinExistence type="inferred from homology"/>
<reference key="1">
    <citation type="journal article" date="2009" name="PLoS Genet.">
        <title>Organised genome dynamics in the Escherichia coli species results in highly diverse adaptive paths.</title>
        <authorList>
            <person name="Touchon M."/>
            <person name="Hoede C."/>
            <person name="Tenaillon O."/>
            <person name="Barbe V."/>
            <person name="Baeriswyl S."/>
            <person name="Bidet P."/>
            <person name="Bingen E."/>
            <person name="Bonacorsi S."/>
            <person name="Bouchier C."/>
            <person name="Bouvet O."/>
            <person name="Calteau A."/>
            <person name="Chiapello H."/>
            <person name="Clermont O."/>
            <person name="Cruveiller S."/>
            <person name="Danchin A."/>
            <person name="Diard M."/>
            <person name="Dossat C."/>
            <person name="Karoui M.E."/>
            <person name="Frapy E."/>
            <person name="Garry L."/>
            <person name="Ghigo J.M."/>
            <person name="Gilles A.M."/>
            <person name="Johnson J."/>
            <person name="Le Bouguenec C."/>
            <person name="Lescat M."/>
            <person name="Mangenot S."/>
            <person name="Martinez-Jehanne V."/>
            <person name="Matic I."/>
            <person name="Nassif X."/>
            <person name="Oztas S."/>
            <person name="Petit M.A."/>
            <person name="Pichon C."/>
            <person name="Rouy Z."/>
            <person name="Ruf C.S."/>
            <person name="Schneider D."/>
            <person name="Tourret J."/>
            <person name="Vacherie B."/>
            <person name="Vallenet D."/>
            <person name="Medigue C."/>
            <person name="Rocha E.P.C."/>
            <person name="Denamur E."/>
        </authorList>
    </citation>
    <scope>NUCLEOTIDE SEQUENCE [LARGE SCALE GENOMIC DNA]</scope>
    <source>
        <strain>55989 / EAEC</strain>
    </source>
</reference>
<feature type="chain" id="PRO_1000191714" description="Ion-translocating oxidoreductase complex subunit A">
    <location>
        <begin position="1"/>
        <end position="193"/>
    </location>
</feature>
<feature type="transmembrane region" description="Helical" evidence="1">
    <location>
        <begin position="5"/>
        <end position="25"/>
    </location>
</feature>
<feature type="transmembrane region" description="Helical" evidence="1">
    <location>
        <begin position="39"/>
        <end position="59"/>
    </location>
</feature>
<feature type="transmembrane region" description="Helical" evidence="1">
    <location>
        <begin position="63"/>
        <end position="83"/>
    </location>
</feature>
<feature type="transmembrane region" description="Helical" evidence="1">
    <location>
        <begin position="102"/>
        <end position="122"/>
    </location>
</feature>
<feature type="transmembrane region" description="Helical" evidence="1">
    <location>
        <begin position="134"/>
        <end position="154"/>
    </location>
</feature>
<feature type="transmembrane region" description="Helical" evidence="1">
    <location>
        <begin position="171"/>
        <end position="191"/>
    </location>
</feature>
<dbReference type="EC" id="7.-.-.-" evidence="1"/>
<dbReference type="EMBL" id="CU928145">
    <property type="protein sequence ID" value="CAU97647.1"/>
    <property type="molecule type" value="Genomic_DNA"/>
</dbReference>
<dbReference type="RefSeq" id="WP_000133193.1">
    <property type="nucleotide sequence ID" value="NZ_CP028304.1"/>
</dbReference>
<dbReference type="SMR" id="B7L5I0"/>
<dbReference type="GeneID" id="89516393"/>
<dbReference type="KEGG" id="eck:EC55989_1795"/>
<dbReference type="HOGENOM" id="CLU_095255_1_0_6"/>
<dbReference type="Proteomes" id="UP000000746">
    <property type="component" value="Chromosome"/>
</dbReference>
<dbReference type="GO" id="GO:0005886">
    <property type="term" value="C:plasma membrane"/>
    <property type="evidence" value="ECO:0007669"/>
    <property type="project" value="UniProtKB-SubCell"/>
</dbReference>
<dbReference type="GO" id="GO:0022900">
    <property type="term" value="P:electron transport chain"/>
    <property type="evidence" value="ECO:0007669"/>
    <property type="project" value="UniProtKB-UniRule"/>
</dbReference>
<dbReference type="HAMAP" id="MF_00459">
    <property type="entry name" value="RsxA_RnfA"/>
    <property type="match status" value="1"/>
</dbReference>
<dbReference type="InterPro" id="IPR011293">
    <property type="entry name" value="Ion_transpt_RnfA/RsxA"/>
</dbReference>
<dbReference type="InterPro" id="IPR003667">
    <property type="entry name" value="NqrDE/RnfAE"/>
</dbReference>
<dbReference type="InterPro" id="IPR050133">
    <property type="entry name" value="NqrDE/RnfAE_oxidrdctase"/>
</dbReference>
<dbReference type="NCBIfam" id="NF003481">
    <property type="entry name" value="PRK05151.1"/>
    <property type="match status" value="1"/>
</dbReference>
<dbReference type="NCBIfam" id="TIGR01943">
    <property type="entry name" value="rnfA"/>
    <property type="match status" value="1"/>
</dbReference>
<dbReference type="PANTHER" id="PTHR30335">
    <property type="entry name" value="INTEGRAL MEMBRANE PROTEIN OF SOXR-REDUCING COMPLEX"/>
    <property type="match status" value="1"/>
</dbReference>
<dbReference type="PANTHER" id="PTHR30335:SF0">
    <property type="entry name" value="ION-TRANSLOCATING OXIDOREDUCTASE COMPLEX SUBUNIT A"/>
    <property type="match status" value="1"/>
</dbReference>
<dbReference type="Pfam" id="PF02508">
    <property type="entry name" value="Rnf-Nqr"/>
    <property type="match status" value="1"/>
</dbReference>
<dbReference type="PIRSF" id="PIRSF006102">
    <property type="entry name" value="NQR_DE"/>
    <property type="match status" value="1"/>
</dbReference>
<sequence>MTDYLLLFVGTVLVNNFVLVKFLGLCPFMGVSKKLETAMGMGLATTFVMTLASICAWLIDTWILIPLNLIYLRTLAFILVIAVVVQFTEMVVRKTSPVLYRLLGIFLPLITTNCAVLGVALLNINLGHNFLQSALYGFSAAVGFSLVMVLFAAIRERLAVADVPAPFRGNAIALITAGLMSLAFMGFSGLVKL</sequence>
<evidence type="ECO:0000255" key="1">
    <source>
        <dbReference type="HAMAP-Rule" id="MF_00459"/>
    </source>
</evidence>
<accession>B7L5I0</accession>
<name>RSXA_ECO55</name>
<gene>
    <name evidence="1" type="primary">rsxA</name>
    <name type="ordered locus">EC55989_1795</name>
</gene>
<protein>
    <recommendedName>
        <fullName evidence="1">Ion-translocating oxidoreductase complex subunit A</fullName>
        <ecNumber evidence="1">7.-.-.-</ecNumber>
    </recommendedName>
    <alternativeName>
        <fullName evidence="1">Rsx electron transport complex subunit A</fullName>
    </alternativeName>
</protein>
<keyword id="KW-0997">Cell inner membrane</keyword>
<keyword id="KW-1003">Cell membrane</keyword>
<keyword id="KW-0249">Electron transport</keyword>
<keyword id="KW-0472">Membrane</keyword>
<keyword id="KW-1185">Reference proteome</keyword>
<keyword id="KW-1278">Translocase</keyword>
<keyword id="KW-0812">Transmembrane</keyword>
<keyword id="KW-1133">Transmembrane helix</keyword>
<keyword id="KW-0813">Transport</keyword>
<comment type="function">
    <text evidence="1">Part of a membrane-bound complex that couples electron transfer with translocation of ions across the membrane. Required to maintain the reduced state of SoxR.</text>
</comment>
<comment type="subunit">
    <text evidence="1">The complex is composed of six subunits: RsxA, RsxB, RsxC, RsxD, RsxE and RsxG.</text>
</comment>
<comment type="subcellular location">
    <subcellularLocation>
        <location evidence="1">Cell inner membrane</location>
        <topology evidence="1">Multi-pass membrane protein</topology>
    </subcellularLocation>
</comment>
<comment type="similarity">
    <text evidence="1">Belongs to the NqrDE/RnfAE family.</text>
</comment>
<organism>
    <name type="scientific">Escherichia coli (strain 55989 / EAEC)</name>
    <dbReference type="NCBI Taxonomy" id="585055"/>
    <lineage>
        <taxon>Bacteria</taxon>
        <taxon>Pseudomonadati</taxon>
        <taxon>Pseudomonadota</taxon>
        <taxon>Gammaproteobacteria</taxon>
        <taxon>Enterobacterales</taxon>
        <taxon>Enterobacteriaceae</taxon>
        <taxon>Escherichia</taxon>
    </lineage>
</organism>